<feature type="chain" id="PRO_0000368427" description="ATP synthase subunit b">
    <location>
        <begin position="1"/>
        <end position="165"/>
    </location>
</feature>
<feature type="transmembrane region" description="Helical" evidence="1">
    <location>
        <begin position="5"/>
        <end position="25"/>
    </location>
</feature>
<name>ATPF_CLOD6</name>
<keyword id="KW-0066">ATP synthesis</keyword>
<keyword id="KW-1003">Cell membrane</keyword>
<keyword id="KW-0138">CF(0)</keyword>
<keyword id="KW-0375">Hydrogen ion transport</keyword>
<keyword id="KW-0406">Ion transport</keyword>
<keyword id="KW-0472">Membrane</keyword>
<keyword id="KW-1185">Reference proteome</keyword>
<keyword id="KW-0812">Transmembrane</keyword>
<keyword id="KW-1133">Transmembrane helix</keyword>
<keyword id="KW-0813">Transport</keyword>
<protein>
    <recommendedName>
        <fullName evidence="1">ATP synthase subunit b</fullName>
    </recommendedName>
    <alternativeName>
        <fullName evidence="1">ATP synthase F(0) sector subunit b</fullName>
    </alternativeName>
    <alternativeName>
        <fullName evidence="1">ATPase subunit I</fullName>
    </alternativeName>
    <alternativeName>
        <fullName evidence="1">F-type ATPase subunit b</fullName>
        <shortName evidence="1">F-ATPase subunit b</shortName>
    </alternativeName>
</protein>
<organism>
    <name type="scientific">Clostridioides difficile (strain 630)</name>
    <name type="common">Peptoclostridium difficile</name>
    <dbReference type="NCBI Taxonomy" id="272563"/>
    <lineage>
        <taxon>Bacteria</taxon>
        <taxon>Bacillati</taxon>
        <taxon>Bacillota</taxon>
        <taxon>Clostridia</taxon>
        <taxon>Peptostreptococcales</taxon>
        <taxon>Peptostreptococcaceae</taxon>
        <taxon>Clostridioides</taxon>
    </lineage>
</organism>
<dbReference type="EMBL" id="AM180355">
    <property type="protein sequence ID" value="CAJ70375.2"/>
    <property type="molecule type" value="Genomic_DNA"/>
</dbReference>
<dbReference type="RefSeq" id="WP_009892033.1">
    <property type="nucleotide sequence ID" value="NZ_JAUPES010000009.1"/>
</dbReference>
<dbReference type="RefSeq" id="YP_001089992.2">
    <property type="nucleotide sequence ID" value="NC_009089.1"/>
</dbReference>
<dbReference type="SMR" id="Q180X1"/>
<dbReference type="STRING" id="272563.CD630_34720"/>
<dbReference type="EnsemblBacteria" id="CAJ70375">
    <property type="protein sequence ID" value="CAJ70375"/>
    <property type="gene ID" value="CD630_34720"/>
</dbReference>
<dbReference type="GeneID" id="66355933"/>
<dbReference type="KEGG" id="cdf:CD630_34720"/>
<dbReference type="KEGG" id="pdc:CDIF630_03783"/>
<dbReference type="PATRIC" id="fig|272563.120.peg.3669"/>
<dbReference type="eggNOG" id="COG0711">
    <property type="taxonomic scope" value="Bacteria"/>
</dbReference>
<dbReference type="OrthoDB" id="9795863at2"/>
<dbReference type="PhylomeDB" id="Q180X1"/>
<dbReference type="BioCyc" id="PDIF272563:G12WB-3652-MONOMER"/>
<dbReference type="Proteomes" id="UP000001978">
    <property type="component" value="Chromosome"/>
</dbReference>
<dbReference type="GO" id="GO:0005886">
    <property type="term" value="C:plasma membrane"/>
    <property type="evidence" value="ECO:0007669"/>
    <property type="project" value="UniProtKB-SubCell"/>
</dbReference>
<dbReference type="GO" id="GO:0045259">
    <property type="term" value="C:proton-transporting ATP synthase complex"/>
    <property type="evidence" value="ECO:0007669"/>
    <property type="project" value="UniProtKB-KW"/>
</dbReference>
<dbReference type="GO" id="GO:0046933">
    <property type="term" value="F:proton-transporting ATP synthase activity, rotational mechanism"/>
    <property type="evidence" value="ECO:0007669"/>
    <property type="project" value="UniProtKB-UniRule"/>
</dbReference>
<dbReference type="GO" id="GO:0046961">
    <property type="term" value="F:proton-transporting ATPase activity, rotational mechanism"/>
    <property type="evidence" value="ECO:0007669"/>
    <property type="project" value="TreeGrafter"/>
</dbReference>
<dbReference type="CDD" id="cd06503">
    <property type="entry name" value="ATP-synt_Fo_b"/>
    <property type="match status" value="1"/>
</dbReference>
<dbReference type="Gene3D" id="6.10.250.1580">
    <property type="match status" value="1"/>
</dbReference>
<dbReference type="HAMAP" id="MF_01398">
    <property type="entry name" value="ATP_synth_b_bprime"/>
    <property type="match status" value="1"/>
</dbReference>
<dbReference type="InterPro" id="IPR028987">
    <property type="entry name" value="ATP_synth_B-like_membr_sf"/>
</dbReference>
<dbReference type="InterPro" id="IPR002146">
    <property type="entry name" value="ATP_synth_b/b'su_bac/chlpt"/>
</dbReference>
<dbReference type="InterPro" id="IPR005864">
    <property type="entry name" value="ATP_synth_F0_bsu_bac"/>
</dbReference>
<dbReference type="InterPro" id="IPR050059">
    <property type="entry name" value="ATP_synthase_B_chain"/>
</dbReference>
<dbReference type="NCBIfam" id="TIGR01144">
    <property type="entry name" value="ATP_synt_b"/>
    <property type="match status" value="1"/>
</dbReference>
<dbReference type="PANTHER" id="PTHR33445:SF1">
    <property type="entry name" value="ATP SYNTHASE SUBUNIT B"/>
    <property type="match status" value="1"/>
</dbReference>
<dbReference type="PANTHER" id="PTHR33445">
    <property type="entry name" value="ATP SYNTHASE SUBUNIT B', CHLOROPLASTIC"/>
    <property type="match status" value="1"/>
</dbReference>
<dbReference type="Pfam" id="PF00430">
    <property type="entry name" value="ATP-synt_B"/>
    <property type="match status" value="1"/>
</dbReference>
<dbReference type="SUPFAM" id="SSF81573">
    <property type="entry name" value="F1F0 ATP synthase subunit B, membrane domain"/>
    <property type="match status" value="1"/>
</dbReference>
<accession>Q180X1</accession>
<sequence>MEKALVGITWEFVFQIVNTFIIFLLLRKLLFKPVLNIIESRENDIKSDLAEGEKAKNEGLALKKEYESKINFAKDEGQEIIKQATIRAEQKSDDIVNTAKKDALDIKEKANKDIEQERQKVINEIKNDISNIALLAASKVIEKDLDKSKHEELIENFIKEVGEAK</sequence>
<comment type="function">
    <text evidence="1">F(1)F(0) ATP synthase produces ATP from ADP in the presence of a proton or sodium gradient. F-type ATPases consist of two structural domains, F(1) containing the extramembraneous catalytic core and F(0) containing the membrane proton channel, linked together by a central stalk and a peripheral stalk. During catalysis, ATP synthesis in the catalytic domain of F(1) is coupled via a rotary mechanism of the central stalk subunits to proton translocation.</text>
</comment>
<comment type="function">
    <text evidence="1">Component of the F(0) channel, it forms part of the peripheral stalk, linking F(1) to F(0).</text>
</comment>
<comment type="subunit">
    <text evidence="1">F-type ATPases have 2 components, F(1) - the catalytic core - and F(0) - the membrane proton channel. F(1) has five subunits: alpha(3), beta(3), gamma(1), delta(1), epsilon(1). F(0) has three main subunits: a(1), b(2) and c(10-14). The alpha and beta chains form an alternating ring which encloses part of the gamma chain. F(1) is attached to F(0) by a central stalk formed by the gamma and epsilon chains, while a peripheral stalk is formed by the delta and b chains.</text>
</comment>
<comment type="subcellular location">
    <subcellularLocation>
        <location evidence="1">Cell membrane</location>
        <topology evidence="1">Single-pass membrane protein</topology>
    </subcellularLocation>
</comment>
<comment type="similarity">
    <text evidence="1">Belongs to the ATPase B chain family.</text>
</comment>
<gene>
    <name evidence="1" type="primary">atpF</name>
    <name type="ordered locus">CD630_34720</name>
</gene>
<evidence type="ECO:0000255" key="1">
    <source>
        <dbReference type="HAMAP-Rule" id="MF_01398"/>
    </source>
</evidence>
<proteinExistence type="inferred from homology"/>
<reference key="1">
    <citation type="journal article" date="2006" name="Nat. Genet.">
        <title>The multidrug-resistant human pathogen Clostridium difficile has a highly mobile, mosaic genome.</title>
        <authorList>
            <person name="Sebaihia M."/>
            <person name="Wren B.W."/>
            <person name="Mullany P."/>
            <person name="Fairweather N.F."/>
            <person name="Minton N."/>
            <person name="Stabler R."/>
            <person name="Thomson N.R."/>
            <person name="Roberts A.P."/>
            <person name="Cerdeno-Tarraga A.M."/>
            <person name="Wang H."/>
            <person name="Holden M.T.G."/>
            <person name="Wright A."/>
            <person name="Churcher C."/>
            <person name="Quail M.A."/>
            <person name="Baker S."/>
            <person name="Bason N."/>
            <person name="Brooks K."/>
            <person name="Chillingworth T."/>
            <person name="Cronin A."/>
            <person name="Davis P."/>
            <person name="Dowd L."/>
            <person name="Fraser A."/>
            <person name="Feltwell T."/>
            <person name="Hance Z."/>
            <person name="Holroyd S."/>
            <person name="Jagels K."/>
            <person name="Moule S."/>
            <person name="Mungall K."/>
            <person name="Price C."/>
            <person name="Rabbinowitsch E."/>
            <person name="Sharp S."/>
            <person name="Simmonds M."/>
            <person name="Stevens K."/>
            <person name="Unwin L."/>
            <person name="Whithead S."/>
            <person name="Dupuy B."/>
            <person name="Dougan G."/>
            <person name="Barrell B."/>
            <person name="Parkhill J."/>
        </authorList>
    </citation>
    <scope>NUCLEOTIDE SEQUENCE [LARGE SCALE GENOMIC DNA]</scope>
    <source>
        <strain>630</strain>
    </source>
</reference>